<keyword id="KW-0963">Cytoplasm</keyword>
<keyword id="KW-0342">GTP-binding</keyword>
<keyword id="KW-0396">Initiation factor</keyword>
<keyword id="KW-0547">Nucleotide-binding</keyword>
<keyword id="KW-0648">Protein biosynthesis</keyword>
<keyword id="KW-1185">Reference proteome</keyword>
<reference key="1">
    <citation type="journal article" date="2001" name="Nature">
        <title>Genome sequence of Yersinia pestis, the causative agent of plague.</title>
        <authorList>
            <person name="Parkhill J."/>
            <person name="Wren B.W."/>
            <person name="Thomson N.R."/>
            <person name="Titball R.W."/>
            <person name="Holden M.T.G."/>
            <person name="Prentice M.B."/>
            <person name="Sebaihia M."/>
            <person name="James K.D."/>
            <person name="Churcher C.M."/>
            <person name="Mungall K.L."/>
            <person name="Baker S."/>
            <person name="Basham D."/>
            <person name="Bentley S.D."/>
            <person name="Brooks K."/>
            <person name="Cerdeno-Tarraga A.-M."/>
            <person name="Chillingworth T."/>
            <person name="Cronin A."/>
            <person name="Davies R.M."/>
            <person name="Davis P."/>
            <person name="Dougan G."/>
            <person name="Feltwell T."/>
            <person name="Hamlin N."/>
            <person name="Holroyd S."/>
            <person name="Jagels K."/>
            <person name="Karlyshev A.V."/>
            <person name="Leather S."/>
            <person name="Moule S."/>
            <person name="Oyston P.C.F."/>
            <person name="Quail M.A."/>
            <person name="Rutherford K.M."/>
            <person name="Simmonds M."/>
            <person name="Skelton J."/>
            <person name="Stevens K."/>
            <person name="Whitehead S."/>
            <person name="Barrell B.G."/>
        </authorList>
    </citation>
    <scope>NUCLEOTIDE SEQUENCE [LARGE SCALE GENOMIC DNA]</scope>
    <source>
        <strain>CO-92 / Biovar Orientalis</strain>
    </source>
</reference>
<reference key="2">
    <citation type="journal article" date="2002" name="J. Bacteriol.">
        <title>Genome sequence of Yersinia pestis KIM.</title>
        <authorList>
            <person name="Deng W."/>
            <person name="Burland V."/>
            <person name="Plunkett G. III"/>
            <person name="Boutin A."/>
            <person name="Mayhew G.F."/>
            <person name="Liss P."/>
            <person name="Perna N.T."/>
            <person name="Rose D.J."/>
            <person name="Mau B."/>
            <person name="Zhou S."/>
            <person name="Schwartz D.C."/>
            <person name="Fetherston J.D."/>
            <person name="Lindler L.E."/>
            <person name="Brubaker R.R."/>
            <person name="Plano G.V."/>
            <person name="Straley S.C."/>
            <person name="McDonough K.A."/>
            <person name="Nilles M.L."/>
            <person name="Matson J.S."/>
            <person name="Blattner F.R."/>
            <person name="Perry R.D."/>
        </authorList>
    </citation>
    <scope>NUCLEOTIDE SEQUENCE [LARGE SCALE GENOMIC DNA]</scope>
    <source>
        <strain>KIM10+ / Biovar Mediaevalis</strain>
    </source>
</reference>
<reference key="3">
    <citation type="journal article" date="2004" name="DNA Res.">
        <title>Complete genome sequence of Yersinia pestis strain 91001, an isolate avirulent to humans.</title>
        <authorList>
            <person name="Song Y."/>
            <person name="Tong Z."/>
            <person name="Wang J."/>
            <person name="Wang L."/>
            <person name="Guo Z."/>
            <person name="Han Y."/>
            <person name="Zhang J."/>
            <person name="Pei D."/>
            <person name="Zhou D."/>
            <person name="Qin H."/>
            <person name="Pang X."/>
            <person name="Han Y."/>
            <person name="Zhai J."/>
            <person name="Li M."/>
            <person name="Cui B."/>
            <person name="Qi Z."/>
            <person name="Jin L."/>
            <person name="Dai R."/>
            <person name="Chen F."/>
            <person name="Li S."/>
            <person name="Ye C."/>
            <person name="Du Z."/>
            <person name="Lin W."/>
            <person name="Wang J."/>
            <person name="Yu J."/>
            <person name="Yang H."/>
            <person name="Wang J."/>
            <person name="Huang P."/>
            <person name="Yang R."/>
        </authorList>
    </citation>
    <scope>NUCLEOTIDE SEQUENCE [LARGE SCALE GENOMIC DNA]</scope>
    <source>
        <strain>91001 / Biovar Mediaevalis</strain>
    </source>
</reference>
<gene>
    <name evidence="2" type="primary">infB</name>
    <name type="ordered locus">YPO3496</name>
    <name type="ordered locus">y0688</name>
    <name type="ordered locus">YP_0587</name>
</gene>
<accession>Q8ZBC2</accession>
<accession>Q0WBF3</accession>
<comment type="function">
    <text evidence="2">One of the essential components for the initiation of protein synthesis. Protects formylmethionyl-tRNA from spontaneous hydrolysis and promotes its binding to the 30S ribosomal subunits. Also involved in the hydrolysis of GTP during the formation of the 70S ribosomal complex.</text>
</comment>
<comment type="subcellular location">
    <subcellularLocation>
        <location evidence="2">Cytoplasm</location>
    </subcellularLocation>
</comment>
<comment type="similarity">
    <text evidence="2">Belongs to the TRAFAC class translation factor GTPase superfamily. Classic translation factor GTPase family. IF-2 subfamily.</text>
</comment>
<protein>
    <recommendedName>
        <fullName evidence="2">Translation initiation factor IF-2</fullName>
    </recommendedName>
</protein>
<feature type="chain" id="PRO_0000137289" description="Translation initiation factor IF-2">
    <location>
        <begin position="1"/>
        <end position="892"/>
    </location>
</feature>
<feature type="domain" description="tr-type G">
    <location>
        <begin position="391"/>
        <end position="560"/>
    </location>
</feature>
<feature type="region of interest" description="Disordered" evidence="3">
    <location>
        <begin position="65"/>
        <end position="296"/>
    </location>
</feature>
<feature type="region of interest" description="G1" evidence="1">
    <location>
        <begin position="400"/>
        <end position="407"/>
    </location>
</feature>
<feature type="region of interest" description="G2" evidence="1">
    <location>
        <begin position="425"/>
        <end position="429"/>
    </location>
</feature>
<feature type="region of interest" description="G3" evidence="1">
    <location>
        <begin position="446"/>
        <end position="449"/>
    </location>
</feature>
<feature type="region of interest" description="G4" evidence="1">
    <location>
        <begin position="500"/>
        <end position="503"/>
    </location>
</feature>
<feature type="region of interest" description="G5" evidence="1">
    <location>
        <begin position="536"/>
        <end position="538"/>
    </location>
</feature>
<feature type="compositionally biased region" description="Polar residues" evidence="3">
    <location>
        <begin position="68"/>
        <end position="82"/>
    </location>
</feature>
<feature type="compositionally biased region" description="Basic and acidic residues" evidence="3">
    <location>
        <begin position="99"/>
        <end position="217"/>
    </location>
</feature>
<feature type="compositionally biased region" description="Polar residues" evidence="3">
    <location>
        <begin position="224"/>
        <end position="237"/>
    </location>
</feature>
<feature type="compositionally biased region" description="Basic and acidic residues" evidence="3">
    <location>
        <begin position="239"/>
        <end position="254"/>
    </location>
</feature>
<feature type="compositionally biased region" description="Basic residues" evidence="3">
    <location>
        <begin position="255"/>
        <end position="269"/>
    </location>
</feature>
<feature type="compositionally biased region" description="Basic and acidic residues" evidence="3">
    <location>
        <begin position="270"/>
        <end position="283"/>
    </location>
</feature>
<feature type="binding site" evidence="2">
    <location>
        <begin position="400"/>
        <end position="407"/>
    </location>
    <ligand>
        <name>GTP</name>
        <dbReference type="ChEBI" id="CHEBI:37565"/>
    </ligand>
</feature>
<feature type="binding site" evidence="2">
    <location>
        <begin position="446"/>
        <end position="450"/>
    </location>
    <ligand>
        <name>GTP</name>
        <dbReference type="ChEBI" id="CHEBI:37565"/>
    </ligand>
</feature>
<feature type="binding site" evidence="2">
    <location>
        <begin position="500"/>
        <end position="503"/>
    </location>
    <ligand>
        <name>GTP</name>
        <dbReference type="ChEBI" id="CHEBI:37565"/>
    </ligand>
</feature>
<feature type="sequence conflict" description="In Ref. 1." evidence="4" ref="1">
    <location>
        <begin position="113"/>
        <end position="120"/>
    </location>
</feature>
<organism>
    <name type="scientific">Yersinia pestis</name>
    <dbReference type="NCBI Taxonomy" id="632"/>
    <lineage>
        <taxon>Bacteria</taxon>
        <taxon>Pseudomonadati</taxon>
        <taxon>Pseudomonadota</taxon>
        <taxon>Gammaproteobacteria</taxon>
        <taxon>Enterobacterales</taxon>
        <taxon>Yersiniaceae</taxon>
        <taxon>Yersinia</taxon>
    </lineage>
</organism>
<evidence type="ECO:0000250" key="1"/>
<evidence type="ECO:0000255" key="2">
    <source>
        <dbReference type="HAMAP-Rule" id="MF_00100"/>
    </source>
</evidence>
<evidence type="ECO:0000256" key="3">
    <source>
        <dbReference type="SAM" id="MobiDB-lite"/>
    </source>
</evidence>
<evidence type="ECO:0000305" key="4"/>
<proteinExistence type="inferred from homology"/>
<sequence>MTDVTVKSLAAEIQTPVDRLVQQFADAGIKKSDVDSVTQQEKEILLAHLNREHGSVPNKLTLQRKTRSTLNIPSTGGKSKSVQIEVRKKRTYVNTPEAEQAKAEEQAQREAEEQAQREAEATAQKIAEEKAKREAEEQAKREAAEKAKRQAAEKEKVTNQQTDEKTKPAQTDKARREAEAAELKRSVEEETRRKVEEDAKRVAEEARKMAAENEGKWPEPVAEQTESADYHVTTSQHARAAEDENDAKVEGDRRSRTRGGKATKQKKGNKLSESKADREEARAVGRKGKRKPSTLQQSFNKPVVAVNRDVVIGETVTVAELANKMAVKGSQVIKAMMKLGAMATINQVIDQETAQLVAEEMGHKVILRRENELEEALMSDRDIGVEAAAEHRAPVVTIMGHVDHGKTSLLDYIRSTKVASGEAGGITQHIGAYHVETENGMITFLDTPGHAAFTSMRARGAQATDIVVLVVAADDGVMPQTIEAIQHAKAANVPVVVAVNKIDKPEADPDRVKTELSQYGIQPEEWGGESQFINVSAKAGIGIDELLNAILLQAEVLELKAVRTGMANGVVIESFLDKGRGPVATVLVQQGTLNKGDIVLCGFEYGRVRAMRDELGRDITSAGPSIPVEILGLSSVPAAGDEVTVVRDEKKAREVALYRQGKFREVKLARQQKSKLENMFANMTEGEVSELNIVIKSDVQGSCEAICDSLEKLSTDEVKVRIVGSGVGGITETDATLAAASGAIILGFNVRADASARRVVETEGLDLRYYSVIYSLIDEVKQAMSGMLAPEYKQQIIGLAEVRDVFKSPKFGAIAGCMVTEGVIKRNNPIRVLRDNVVIYEGELESLRRFKDDVSEVRNGMECGIGVKNYNDVRTGDVIEVFEIIEIKRTIA</sequence>
<name>IF2_YERPE</name>
<dbReference type="EMBL" id="AL590842">
    <property type="protein sequence ID" value="CAL22084.1"/>
    <property type="molecule type" value="Genomic_DNA"/>
</dbReference>
<dbReference type="EMBL" id="AE009952">
    <property type="protein sequence ID" value="AAM84276.1"/>
    <property type="molecule type" value="Genomic_DNA"/>
</dbReference>
<dbReference type="EMBL" id="AE017042">
    <property type="protein sequence ID" value="AAS60857.1"/>
    <property type="molecule type" value="Genomic_DNA"/>
</dbReference>
<dbReference type="PIR" id="AI0424">
    <property type="entry name" value="AI0424"/>
</dbReference>
<dbReference type="RefSeq" id="WP_002223151.1">
    <property type="nucleotide sequence ID" value="NZ_WUCM01000036.1"/>
</dbReference>
<dbReference type="RefSeq" id="YP_002348385.1">
    <property type="nucleotide sequence ID" value="NC_003143.1"/>
</dbReference>
<dbReference type="SMR" id="Q8ZBC2"/>
<dbReference type="IntAct" id="Q8ZBC2">
    <property type="interactions" value="5"/>
</dbReference>
<dbReference type="STRING" id="214092.YPO3496"/>
<dbReference type="PaxDb" id="214092-YPO3496"/>
<dbReference type="DNASU" id="1145635"/>
<dbReference type="EnsemblBacteria" id="AAS60857">
    <property type="protein sequence ID" value="AAS60857"/>
    <property type="gene ID" value="YP_0587"/>
</dbReference>
<dbReference type="GeneID" id="49787518"/>
<dbReference type="KEGG" id="ype:YPO3496"/>
<dbReference type="KEGG" id="ypj:CH55_3330"/>
<dbReference type="KEGG" id="ypk:y0688"/>
<dbReference type="KEGG" id="ypm:YP_0587"/>
<dbReference type="PATRIC" id="fig|1028802.3.peg.422"/>
<dbReference type="eggNOG" id="COG0532">
    <property type="taxonomic scope" value="Bacteria"/>
</dbReference>
<dbReference type="HOGENOM" id="CLU_006301_6_3_6"/>
<dbReference type="OMA" id="RKNPWMN"/>
<dbReference type="Proteomes" id="UP000000815">
    <property type="component" value="Chromosome"/>
</dbReference>
<dbReference type="Proteomes" id="UP000001019">
    <property type="component" value="Chromosome"/>
</dbReference>
<dbReference type="Proteomes" id="UP000002490">
    <property type="component" value="Chromosome"/>
</dbReference>
<dbReference type="GO" id="GO:0005737">
    <property type="term" value="C:cytoplasm"/>
    <property type="evidence" value="ECO:0000318"/>
    <property type="project" value="GO_Central"/>
</dbReference>
<dbReference type="GO" id="GO:0005829">
    <property type="term" value="C:cytosol"/>
    <property type="evidence" value="ECO:0000318"/>
    <property type="project" value="GO_Central"/>
</dbReference>
<dbReference type="GO" id="GO:0005525">
    <property type="term" value="F:GTP binding"/>
    <property type="evidence" value="ECO:0007669"/>
    <property type="project" value="UniProtKB-KW"/>
</dbReference>
<dbReference type="GO" id="GO:0003924">
    <property type="term" value="F:GTPase activity"/>
    <property type="evidence" value="ECO:0007669"/>
    <property type="project" value="UniProtKB-UniRule"/>
</dbReference>
<dbReference type="GO" id="GO:0097216">
    <property type="term" value="F:guanosine tetraphosphate binding"/>
    <property type="evidence" value="ECO:0007669"/>
    <property type="project" value="UniProtKB-ARBA"/>
</dbReference>
<dbReference type="GO" id="GO:0003743">
    <property type="term" value="F:translation initiation factor activity"/>
    <property type="evidence" value="ECO:0000318"/>
    <property type="project" value="GO_Central"/>
</dbReference>
<dbReference type="GO" id="GO:0006413">
    <property type="term" value="P:translational initiation"/>
    <property type="evidence" value="ECO:0000318"/>
    <property type="project" value="GO_Central"/>
</dbReference>
<dbReference type="CDD" id="cd01887">
    <property type="entry name" value="IF2_eIF5B"/>
    <property type="match status" value="1"/>
</dbReference>
<dbReference type="CDD" id="cd03702">
    <property type="entry name" value="IF2_mtIF2_II"/>
    <property type="match status" value="1"/>
</dbReference>
<dbReference type="CDD" id="cd03692">
    <property type="entry name" value="mtIF2_IVc"/>
    <property type="match status" value="1"/>
</dbReference>
<dbReference type="FunFam" id="2.40.30.10:FF:000007">
    <property type="entry name" value="Translation initiation factor IF-2"/>
    <property type="match status" value="1"/>
</dbReference>
<dbReference type="FunFam" id="2.40.30.10:FF:000008">
    <property type="entry name" value="Translation initiation factor IF-2"/>
    <property type="match status" value="1"/>
</dbReference>
<dbReference type="FunFam" id="3.30.56.50:FF:000001">
    <property type="entry name" value="Translation initiation factor IF-2"/>
    <property type="match status" value="1"/>
</dbReference>
<dbReference type="FunFam" id="3.40.50.10050:FF:000001">
    <property type="entry name" value="Translation initiation factor IF-2"/>
    <property type="match status" value="1"/>
</dbReference>
<dbReference type="FunFam" id="3.40.50.300:FF:000019">
    <property type="entry name" value="Translation initiation factor IF-2"/>
    <property type="match status" value="1"/>
</dbReference>
<dbReference type="Gene3D" id="3.40.50.300">
    <property type="entry name" value="P-loop containing nucleotide triphosphate hydrolases"/>
    <property type="match status" value="1"/>
</dbReference>
<dbReference type="Gene3D" id="3.30.56.50">
    <property type="entry name" value="Putative DNA-binding domain, N-terminal subdomain of bacterial translation initiation factor IF2"/>
    <property type="match status" value="1"/>
</dbReference>
<dbReference type="Gene3D" id="2.40.30.10">
    <property type="entry name" value="Translation factors"/>
    <property type="match status" value="2"/>
</dbReference>
<dbReference type="Gene3D" id="3.40.50.10050">
    <property type="entry name" value="Translation initiation factor IF- 2, domain 3"/>
    <property type="match status" value="1"/>
</dbReference>
<dbReference type="HAMAP" id="MF_00100_B">
    <property type="entry name" value="IF_2_B"/>
    <property type="match status" value="1"/>
</dbReference>
<dbReference type="InterPro" id="IPR009061">
    <property type="entry name" value="DNA-bd_dom_put_sf"/>
</dbReference>
<dbReference type="InterPro" id="IPR053905">
    <property type="entry name" value="EF-G-like_DII"/>
</dbReference>
<dbReference type="InterPro" id="IPR004161">
    <property type="entry name" value="EFTu-like_2"/>
</dbReference>
<dbReference type="InterPro" id="IPR013575">
    <property type="entry name" value="IF2_assoc_dom_bac"/>
</dbReference>
<dbReference type="InterPro" id="IPR044145">
    <property type="entry name" value="IF2_II"/>
</dbReference>
<dbReference type="InterPro" id="IPR006847">
    <property type="entry name" value="IF2_N"/>
</dbReference>
<dbReference type="InterPro" id="IPR027417">
    <property type="entry name" value="P-loop_NTPase"/>
</dbReference>
<dbReference type="InterPro" id="IPR005225">
    <property type="entry name" value="Small_GTP-bd"/>
</dbReference>
<dbReference type="InterPro" id="IPR000795">
    <property type="entry name" value="T_Tr_GTP-bd_dom"/>
</dbReference>
<dbReference type="InterPro" id="IPR000178">
    <property type="entry name" value="TF_IF2_bacterial-like"/>
</dbReference>
<dbReference type="InterPro" id="IPR015760">
    <property type="entry name" value="TIF_IF2"/>
</dbReference>
<dbReference type="InterPro" id="IPR023115">
    <property type="entry name" value="TIF_IF2_dom3"/>
</dbReference>
<dbReference type="InterPro" id="IPR036925">
    <property type="entry name" value="TIF_IF2_dom3_sf"/>
</dbReference>
<dbReference type="InterPro" id="IPR009000">
    <property type="entry name" value="Transl_B-barrel_sf"/>
</dbReference>
<dbReference type="NCBIfam" id="TIGR00487">
    <property type="entry name" value="IF-2"/>
    <property type="match status" value="1"/>
</dbReference>
<dbReference type="NCBIfam" id="TIGR00231">
    <property type="entry name" value="small_GTP"/>
    <property type="match status" value="1"/>
</dbReference>
<dbReference type="PANTHER" id="PTHR43381:SF5">
    <property type="entry name" value="TR-TYPE G DOMAIN-CONTAINING PROTEIN"/>
    <property type="match status" value="1"/>
</dbReference>
<dbReference type="PANTHER" id="PTHR43381">
    <property type="entry name" value="TRANSLATION INITIATION FACTOR IF-2-RELATED"/>
    <property type="match status" value="1"/>
</dbReference>
<dbReference type="Pfam" id="PF22042">
    <property type="entry name" value="EF-G_D2"/>
    <property type="match status" value="1"/>
</dbReference>
<dbReference type="Pfam" id="PF00009">
    <property type="entry name" value="GTP_EFTU"/>
    <property type="match status" value="1"/>
</dbReference>
<dbReference type="Pfam" id="PF03144">
    <property type="entry name" value="GTP_EFTU_D2"/>
    <property type="match status" value="1"/>
</dbReference>
<dbReference type="Pfam" id="PF11987">
    <property type="entry name" value="IF-2"/>
    <property type="match status" value="1"/>
</dbReference>
<dbReference type="Pfam" id="PF08364">
    <property type="entry name" value="IF2_assoc"/>
    <property type="match status" value="1"/>
</dbReference>
<dbReference type="Pfam" id="PF04760">
    <property type="entry name" value="IF2_N"/>
    <property type="match status" value="2"/>
</dbReference>
<dbReference type="SUPFAM" id="SSF52156">
    <property type="entry name" value="Initiation factor IF2/eIF5b, domain 3"/>
    <property type="match status" value="1"/>
</dbReference>
<dbReference type="SUPFAM" id="SSF52540">
    <property type="entry name" value="P-loop containing nucleoside triphosphate hydrolases"/>
    <property type="match status" value="1"/>
</dbReference>
<dbReference type="SUPFAM" id="SSF46955">
    <property type="entry name" value="Putative DNA-binding domain"/>
    <property type="match status" value="1"/>
</dbReference>
<dbReference type="SUPFAM" id="SSF50447">
    <property type="entry name" value="Translation proteins"/>
    <property type="match status" value="2"/>
</dbReference>
<dbReference type="PROSITE" id="PS51722">
    <property type="entry name" value="G_TR_2"/>
    <property type="match status" value="1"/>
</dbReference>
<dbReference type="PROSITE" id="PS01176">
    <property type="entry name" value="IF2"/>
    <property type="match status" value="1"/>
</dbReference>